<name>AIM36_CANAW</name>
<sequence>MFARLVPRLQPQLLSKRVLTARYPMLTTTPIYHQTPMQIIKRNYVIVHRERKKEPVIRYLFYMLVASWVAIYFVANRVDKKKPPQQSFTEREFQSYEEETGLKRRNKLISHTMNSKYKFYVIPYVHDEEELKKVANLLQHKDENATVKIIDPAQLIEEQKKDEGMKYHYLLEDLDEQGRPYPPGLITAVIKQEIYKILNTREGTFDTNFIIKNYPQTTNEAIKFENDISDIQKCLILHYDMLNELPKNKTNEEQRAIKNVDGYFNSVGKSKTLVEKFDPMDKEFEEIMLEDI</sequence>
<evidence type="ECO:0000250" key="1"/>
<evidence type="ECO:0000255" key="2"/>
<evidence type="ECO:0000305" key="3"/>
<gene>
    <name type="primary">AIM36</name>
    <name type="synonym">FMP39</name>
    <name type="ORF">CAWG_03996</name>
</gene>
<reference key="1">
    <citation type="journal article" date="2009" name="Nature">
        <title>Evolution of pathogenicity and sexual reproduction in eight Candida genomes.</title>
        <authorList>
            <person name="Butler G."/>
            <person name="Rasmussen M.D."/>
            <person name="Lin M.F."/>
            <person name="Santos M.A.S."/>
            <person name="Sakthikumar S."/>
            <person name="Munro C.A."/>
            <person name="Rheinbay E."/>
            <person name="Grabherr M."/>
            <person name="Forche A."/>
            <person name="Reedy J.L."/>
            <person name="Agrafioti I."/>
            <person name="Arnaud M.B."/>
            <person name="Bates S."/>
            <person name="Brown A.J.P."/>
            <person name="Brunke S."/>
            <person name="Costanzo M.C."/>
            <person name="Fitzpatrick D.A."/>
            <person name="de Groot P.W.J."/>
            <person name="Harris D."/>
            <person name="Hoyer L.L."/>
            <person name="Hube B."/>
            <person name="Klis F.M."/>
            <person name="Kodira C."/>
            <person name="Lennard N."/>
            <person name="Logue M.E."/>
            <person name="Martin R."/>
            <person name="Neiman A.M."/>
            <person name="Nikolaou E."/>
            <person name="Quail M.A."/>
            <person name="Quinn J."/>
            <person name="Santos M.C."/>
            <person name="Schmitzberger F.F."/>
            <person name="Sherlock G."/>
            <person name="Shah P."/>
            <person name="Silverstein K.A.T."/>
            <person name="Skrzypek M.S."/>
            <person name="Soll D."/>
            <person name="Staggs R."/>
            <person name="Stansfield I."/>
            <person name="Stumpf M.P.H."/>
            <person name="Sudbery P.E."/>
            <person name="Srikantha T."/>
            <person name="Zeng Q."/>
            <person name="Berman J."/>
            <person name="Berriman M."/>
            <person name="Heitman J."/>
            <person name="Gow N.A.R."/>
            <person name="Lorenz M.C."/>
            <person name="Birren B.W."/>
            <person name="Kellis M."/>
            <person name="Cuomo C.A."/>
        </authorList>
    </citation>
    <scope>NUCLEOTIDE SEQUENCE [LARGE SCALE GENOMIC DNA]</scope>
    <source>
        <strain>WO-1</strain>
    </source>
</reference>
<feature type="transit peptide" description="Mitochondrion" evidence="2">
    <location>
        <begin position="1"/>
        <end position="26"/>
    </location>
</feature>
<feature type="chain" id="PRO_0000399720" description="Altered inheritance of mitochondria protein 36, mitochondrial">
    <location>
        <begin position="27"/>
        <end position="292"/>
    </location>
</feature>
<feature type="transmembrane region" description="Helical" evidence="2">
    <location>
        <begin position="56"/>
        <end position="75"/>
    </location>
</feature>
<comment type="subcellular location">
    <subcellularLocation>
        <location evidence="1">Mitochondrion membrane</location>
        <topology evidence="1">Single-pass membrane protein</topology>
    </subcellularLocation>
</comment>
<comment type="similarity">
    <text evidence="3">Belongs to the AIM36 family.</text>
</comment>
<protein>
    <recommendedName>
        <fullName>Altered inheritance of mitochondria protein 36, mitochondrial</fullName>
    </recommendedName>
    <alternativeName>
        <fullName>Found in mitochondria protein 39</fullName>
    </alternativeName>
</protein>
<organism>
    <name type="scientific">Candida albicans (strain WO-1)</name>
    <name type="common">Yeast</name>
    <dbReference type="NCBI Taxonomy" id="294748"/>
    <lineage>
        <taxon>Eukaryota</taxon>
        <taxon>Fungi</taxon>
        <taxon>Dikarya</taxon>
        <taxon>Ascomycota</taxon>
        <taxon>Saccharomycotina</taxon>
        <taxon>Pichiomycetes</taxon>
        <taxon>Debaryomycetaceae</taxon>
        <taxon>Candida/Lodderomyces clade</taxon>
        <taxon>Candida</taxon>
    </lineage>
</organism>
<keyword id="KW-0472">Membrane</keyword>
<keyword id="KW-0496">Mitochondrion</keyword>
<keyword id="KW-0809">Transit peptide</keyword>
<keyword id="KW-0812">Transmembrane</keyword>
<keyword id="KW-1133">Transmembrane helix</keyword>
<accession>C4YJI1</accession>
<dbReference type="EMBL" id="CH672350">
    <property type="protein sequence ID" value="EEQ45665.1"/>
    <property type="molecule type" value="Genomic_DNA"/>
</dbReference>
<dbReference type="SMR" id="C4YJI1"/>
<dbReference type="PaxDb" id="5476-C4YJI1"/>
<dbReference type="VEuPathDB" id="FungiDB:CAWG_03996"/>
<dbReference type="HOGENOM" id="CLU_997550_0_0_1"/>
<dbReference type="OMA" id="INNVVGY"/>
<dbReference type="OrthoDB" id="4824at766764"/>
<dbReference type="Proteomes" id="UP000001429">
    <property type="component" value="Chromosome 2, Supercontig 1.5"/>
</dbReference>
<dbReference type="GO" id="GO:0031966">
    <property type="term" value="C:mitochondrial membrane"/>
    <property type="evidence" value="ECO:0007669"/>
    <property type="project" value="UniProtKB-SubCell"/>
</dbReference>
<dbReference type="Gene3D" id="3.40.50.300">
    <property type="entry name" value="P-loop containing nucleotide triphosphate hydrolases"/>
    <property type="match status" value="1"/>
</dbReference>
<dbReference type="InterPro" id="IPR027417">
    <property type="entry name" value="P-loop_NTPase"/>
</dbReference>
<proteinExistence type="inferred from homology"/>